<gene>
    <name evidence="1" type="primary">purC</name>
    <name type="ordered locus">Ccon26_08750</name>
    <name type="ORF">CCC13826_0132</name>
</gene>
<sequence length="236" mass="26878">MQKRELIYEGKGKKMYATDDPNLLVAEFKDDLTAFDAQKRGNEAGKGALNNKISTQLFKLLESKGIVTDLVETISDTEQVVKKCEIIPLEVVVRNIATGSLSKRLGIKEGTVLPFTLVEFYYKNDDLHDPLVTDEHCIIMGLVKSEKDLQTLRHTAREINSILFKFFAERNLKLVDFKVEFGIDKDGNIILADEISPDSCRFWDATTNEKLDKDRFRQDLGSVKVAYEEVLRRILS</sequence>
<organism>
    <name type="scientific">Campylobacter concisus (strain 13826)</name>
    <dbReference type="NCBI Taxonomy" id="360104"/>
    <lineage>
        <taxon>Bacteria</taxon>
        <taxon>Pseudomonadati</taxon>
        <taxon>Campylobacterota</taxon>
        <taxon>Epsilonproteobacteria</taxon>
        <taxon>Campylobacterales</taxon>
        <taxon>Campylobacteraceae</taxon>
        <taxon>Campylobacter</taxon>
    </lineage>
</organism>
<reference key="1">
    <citation type="submission" date="2007-10" db="EMBL/GenBank/DDBJ databases">
        <title>Genome sequence of Campylobacter concisus 13826 isolated from human feces.</title>
        <authorList>
            <person name="Fouts D.E."/>
            <person name="Mongodin E.F."/>
            <person name="Puiu D."/>
            <person name="Sebastian Y."/>
            <person name="Miller W.G."/>
            <person name="Mandrell R.E."/>
            <person name="On S."/>
            <person name="Nelson K.E."/>
        </authorList>
    </citation>
    <scope>NUCLEOTIDE SEQUENCE [LARGE SCALE GENOMIC DNA]</scope>
    <source>
        <strain>13826</strain>
    </source>
</reference>
<accession>A7ZD85</accession>
<comment type="catalytic activity">
    <reaction evidence="1">
        <text>5-amino-1-(5-phospho-D-ribosyl)imidazole-4-carboxylate + L-aspartate + ATP = (2S)-2-[5-amino-1-(5-phospho-beta-D-ribosyl)imidazole-4-carboxamido]succinate + ADP + phosphate + 2 H(+)</text>
        <dbReference type="Rhea" id="RHEA:22628"/>
        <dbReference type="ChEBI" id="CHEBI:15378"/>
        <dbReference type="ChEBI" id="CHEBI:29991"/>
        <dbReference type="ChEBI" id="CHEBI:30616"/>
        <dbReference type="ChEBI" id="CHEBI:43474"/>
        <dbReference type="ChEBI" id="CHEBI:58443"/>
        <dbReference type="ChEBI" id="CHEBI:77657"/>
        <dbReference type="ChEBI" id="CHEBI:456216"/>
        <dbReference type="EC" id="6.3.2.6"/>
    </reaction>
</comment>
<comment type="pathway">
    <text evidence="1">Purine metabolism; IMP biosynthesis via de novo pathway; 5-amino-1-(5-phospho-D-ribosyl)imidazole-4-carboxamide from 5-amino-1-(5-phospho-D-ribosyl)imidazole-4-carboxylate: step 1/2.</text>
</comment>
<comment type="similarity">
    <text evidence="1">Belongs to the SAICAR synthetase family.</text>
</comment>
<proteinExistence type="inferred from homology"/>
<protein>
    <recommendedName>
        <fullName evidence="1">Phosphoribosylaminoimidazole-succinocarboxamide synthase</fullName>
        <ecNumber evidence="1">6.3.2.6</ecNumber>
    </recommendedName>
    <alternativeName>
        <fullName evidence="1">SAICAR synthetase</fullName>
    </alternativeName>
</protein>
<keyword id="KW-0067">ATP-binding</keyword>
<keyword id="KW-0436">Ligase</keyword>
<keyword id="KW-0547">Nucleotide-binding</keyword>
<keyword id="KW-0658">Purine biosynthesis</keyword>
<dbReference type="EC" id="6.3.2.6" evidence="1"/>
<dbReference type="EMBL" id="CP000792">
    <property type="protein sequence ID" value="EAT97504.1"/>
    <property type="molecule type" value="Genomic_DNA"/>
</dbReference>
<dbReference type="RefSeq" id="WP_009293856.1">
    <property type="nucleotide sequence ID" value="NC_009802.2"/>
</dbReference>
<dbReference type="SMR" id="A7ZD85"/>
<dbReference type="STRING" id="360104.CCC13826_0132"/>
<dbReference type="KEGG" id="cco:CCC13826_0132"/>
<dbReference type="eggNOG" id="COG0152">
    <property type="taxonomic scope" value="Bacteria"/>
</dbReference>
<dbReference type="HOGENOM" id="CLU_061495_2_0_7"/>
<dbReference type="OrthoDB" id="9801549at2"/>
<dbReference type="UniPathway" id="UPA00074">
    <property type="reaction ID" value="UER00131"/>
</dbReference>
<dbReference type="Proteomes" id="UP000001121">
    <property type="component" value="Chromosome"/>
</dbReference>
<dbReference type="GO" id="GO:0005524">
    <property type="term" value="F:ATP binding"/>
    <property type="evidence" value="ECO:0007669"/>
    <property type="project" value="UniProtKB-KW"/>
</dbReference>
<dbReference type="GO" id="GO:0004639">
    <property type="term" value="F:phosphoribosylaminoimidazolesuccinocarboxamide synthase activity"/>
    <property type="evidence" value="ECO:0007669"/>
    <property type="project" value="UniProtKB-UniRule"/>
</dbReference>
<dbReference type="GO" id="GO:0006189">
    <property type="term" value="P:'de novo' IMP biosynthetic process"/>
    <property type="evidence" value="ECO:0007669"/>
    <property type="project" value="UniProtKB-UniRule"/>
</dbReference>
<dbReference type="GO" id="GO:0009236">
    <property type="term" value="P:cobalamin biosynthetic process"/>
    <property type="evidence" value="ECO:0007669"/>
    <property type="project" value="InterPro"/>
</dbReference>
<dbReference type="CDD" id="cd01415">
    <property type="entry name" value="SAICAR_synt_PurC"/>
    <property type="match status" value="1"/>
</dbReference>
<dbReference type="FunFam" id="3.30.470.20:FF:000006">
    <property type="entry name" value="Phosphoribosylaminoimidazole-succinocarboxamide synthase"/>
    <property type="match status" value="1"/>
</dbReference>
<dbReference type="Gene3D" id="3.30.470.20">
    <property type="entry name" value="ATP-grasp fold, B domain"/>
    <property type="match status" value="1"/>
</dbReference>
<dbReference type="Gene3D" id="3.30.200.20">
    <property type="entry name" value="Phosphorylase Kinase, domain 1"/>
    <property type="match status" value="1"/>
</dbReference>
<dbReference type="HAMAP" id="MF_00137">
    <property type="entry name" value="SAICAR_synth"/>
    <property type="match status" value="1"/>
</dbReference>
<dbReference type="InterPro" id="IPR028923">
    <property type="entry name" value="SAICAR_synt/ADE2_N"/>
</dbReference>
<dbReference type="InterPro" id="IPR033934">
    <property type="entry name" value="SAICAR_synt_PurC"/>
</dbReference>
<dbReference type="InterPro" id="IPR001636">
    <property type="entry name" value="SAICAR_synth"/>
</dbReference>
<dbReference type="InterPro" id="IPR050089">
    <property type="entry name" value="SAICAR_synthetase"/>
</dbReference>
<dbReference type="InterPro" id="IPR018236">
    <property type="entry name" value="SAICAR_synthetase_CS"/>
</dbReference>
<dbReference type="NCBIfam" id="TIGR00081">
    <property type="entry name" value="purC"/>
    <property type="match status" value="1"/>
</dbReference>
<dbReference type="PANTHER" id="PTHR43599">
    <property type="entry name" value="MULTIFUNCTIONAL PROTEIN ADE2"/>
    <property type="match status" value="1"/>
</dbReference>
<dbReference type="PANTHER" id="PTHR43599:SF3">
    <property type="entry name" value="SI:DKEY-6E2.2"/>
    <property type="match status" value="1"/>
</dbReference>
<dbReference type="Pfam" id="PF01259">
    <property type="entry name" value="SAICAR_synt"/>
    <property type="match status" value="1"/>
</dbReference>
<dbReference type="SUPFAM" id="SSF56104">
    <property type="entry name" value="SAICAR synthase-like"/>
    <property type="match status" value="1"/>
</dbReference>
<dbReference type="PROSITE" id="PS01057">
    <property type="entry name" value="SAICAR_SYNTHETASE_1"/>
    <property type="match status" value="1"/>
</dbReference>
<name>PUR7_CAMC1</name>
<evidence type="ECO:0000255" key="1">
    <source>
        <dbReference type="HAMAP-Rule" id="MF_00137"/>
    </source>
</evidence>
<feature type="chain" id="PRO_1000018678" description="Phosphoribosylaminoimidazole-succinocarboxamide synthase">
    <location>
        <begin position="1"/>
        <end position="236"/>
    </location>
</feature>